<sequence length="796" mass="91880">MTKDKEPIVKSFHFVCLMIIIVGTRIQFSDGNEFAVDKSKRGLIHVPKDLPLKTKVLDMSQNYIAELQVSDMSFLSELTVLRLSHNRIQLLDLSVFKFNQDLEYLDLSHNQLQKISCHPIVSFRHLDLSFNDFKALPICKEFGNLSQLNFLGLSAMKLQKLDLLPIAHLHLSYILLDLRNYYIKENETESLQILNAKTLHLVFHPTSLFAIQVNISVNTLGCLQLTNIKLNDDNCQVFIKFLSELTRGSTLLNFTLNHIETTWKCLVRVFQFLWPKPVEYLNIYNLTIIESIREEDFTYSKTTLKALTIEHITNQVFLFSQTALYTVFSEMNIMMLTISDTPFIHMLCPHAPSTFKFLNFTQNVFTDSIFEKCSTLVKLETLILQKNGLKDLFKVGLMTKDMPSLEILDVSWNSLESGRHKENCTWVESIVVLNLSSNMLTDSVFRCLPPRIKVLDLHSNKIKSVPKQVVKLEALQELNVAFNSLTDLPGCGSFSSLSVLIIDHNSVSHPSADFFQSCQKMRSIKAGDNPFQCTCELREFVKNIDQVSSEVLEGWPDSYKCDYPESYRGSPLKDFHMSELSCNITLLIVTIGATMLVLAVTVTSLCIYLDLPWYLRMVCQWTQTRRRARNIPLEELQRNLQFHAFISYSEHDSAWVKSELVPYLEKEDIQICLHERNFVPGKSIVENIINCIEKSYKSIFVLSPNFVQSEWCHYELYFAHHNLFHEGSNNLILILLEPIPQNSIPNKYHKLKALMTQRTYLQWPKEKSKRGLFWANIRAAFNMKLTLVTENNDVKS</sequence>
<protein>
    <recommendedName>
        <fullName>Toll-like receptor 6</fullName>
    </recommendedName>
    <cdAntigenName>CD286</cdAntigenName>
</protein>
<proteinExistence type="evidence at protein level"/>
<dbReference type="EMBL" id="AB020807">
    <property type="protein sequence ID" value="BAA78631.1"/>
    <property type="molecule type" value="mRNA"/>
</dbReference>
<dbReference type="EMBL" id="AB445652">
    <property type="protein sequence ID" value="BAG55049.1"/>
    <property type="molecule type" value="mRNA"/>
</dbReference>
<dbReference type="EMBL" id="EU170528">
    <property type="protein sequence ID" value="ABW37063.1"/>
    <property type="molecule type" value="Genomic_DNA"/>
</dbReference>
<dbReference type="EMBL" id="EU170529">
    <property type="protein sequence ID" value="ABW37064.1"/>
    <property type="molecule type" value="Genomic_DNA"/>
</dbReference>
<dbReference type="EMBL" id="EU170531">
    <property type="protein sequence ID" value="ABW37066.1"/>
    <property type="molecule type" value="Genomic_DNA"/>
</dbReference>
<dbReference type="EMBL" id="EU170532">
    <property type="protein sequence ID" value="ABW37067.1"/>
    <property type="molecule type" value="Genomic_DNA"/>
</dbReference>
<dbReference type="EMBL" id="EU170533">
    <property type="protein sequence ID" value="ABW37068.1"/>
    <property type="molecule type" value="Genomic_DNA"/>
</dbReference>
<dbReference type="EMBL" id="EU170534">
    <property type="protein sequence ID" value="ABW37069.1"/>
    <property type="molecule type" value="Genomic_DNA"/>
</dbReference>
<dbReference type="EMBL" id="EU170536">
    <property type="protein sequence ID" value="ABW37071.1"/>
    <property type="molecule type" value="Genomic_DNA"/>
</dbReference>
<dbReference type="EMBL" id="EU195537">
    <property type="protein sequence ID" value="ABY67113.1"/>
    <property type="molecule type" value="Genomic_DNA"/>
</dbReference>
<dbReference type="EMBL" id="EU195538">
    <property type="protein sequence ID" value="ABY67114.1"/>
    <property type="molecule type" value="Genomic_DNA"/>
</dbReference>
<dbReference type="EMBL" id="EU195539">
    <property type="protein sequence ID" value="ABY67115.1"/>
    <property type="molecule type" value="Genomic_DNA"/>
</dbReference>
<dbReference type="EMBL" id="EU195541">
    <property type="protein sequence ID" value="ABY67117.1"/>
    <property type="molecule type" value="Genomic_DNA"/>
</dbReference>
<dbReference type="EMBL" id="EU195542">
    <property type="protein sequence ID" value="ABY67118.1"/>
    <property type="molecule type" value="Genomic_DNA"/>
</dbReference>
<dbReference type="EMBL" id="EU195543">
    <property type="protein sequence ID" value="ABY67119.1"/>
    <property type="molecule type" value="Genomic_DNA"/>
</dbReference>
<dbReference type="EMBL" id="EU195544">
    <property type="protein sequence ID" value="ABY67120.1"/>
    <property type="molecule type" value="Genomic_DNA"/>
</dbReference>
<dbReference type="EMBL" id="EU195545">
    <property type="protein sequence ID" value="ABY67121.1"/>
    <property type="molecule type" value="Genomic_DNA"/>
</dbReference>
<dbReference type="EMBL" id="EU195546">
    <property type="protein sequence ID" value="ABY67122.1"/>
    <property type="molecule type" value="Genomic_DNA"/>
</dbReference>
<dbReference type="EMBL" id="EU195547">
    <property type="protein sequence ID" value="ABY67123.1"/>
    <property type="molecule type" value="Genomic_DNA"/>
</dbReference>
<dbReference type="EMBL" id="EU195548">
    <property type="protein sequence ID" value="ABY67124.1"/>
    <property type="molecule type" value="Genomic_DNA"/>
</dbReference>
<dbReference type="EMBL" id="EU195550">
    <property type="protein sequence ID" value="ABY67126.1"/>
    <property type="molecule type" value="Genomic_DNA"/>
</dbReference>
<dbReference type="EMBL" id="EU195551">
    <property type="protein sequence ID" value="ABY67127.1"/>
    <property type="molecule type" value="Genomic_DNA"/>
</dbReference>
<dbReference type="EMBL" id="EU195553">
    <property type="protein sequence ID" value="ABY67129.1"/>
    <property type="molecule type" value="Genomic_DNA"/>
</dbReference>
<dbReference type="EMBL" id="EU195554">
    <property type="protein sequence ID" value="ABY67130.1"/>
    <property type="molecule type" value="Genomic_DNA"/>
</dbReference>
<dbReference type="EMBL" id="EU195555">
    <property type="protein sequence ID" value="ABY67131.1"/>
    <property type="molecule type" value="Genomic_DNA"/>
</dbReference>
<dbReference type="EMBL" id="EU195557">
    <property type="protein sequence ID" value="ABY67133.1"/>
    <property type="molecule type" value="Genomic_DNA"/>
</dbReference>
<dbReference type="EMBL" id="AC108044">
    <property type="status" value="NOT_ANNOTATED_CDS"/>
    <property type="molecule type" value="Genomic_DNA"/>
</dbReference>
<dbReference type="EMBL" id="CH471069">
    <property type="protein sequence ID" value="EAW92902.1"/>
    <property type="molecule type" value="Genomic_DNA"/>
</dbReference>
<dbReference type="EMBL" id="BC111755">
    <property type="protein sequence ID" value="AAI11756.1"/>
    <property type="molecule type" value="mRNA"/>
</dbReference>
<dbReference type="CCDS" id="CCDS3446.1">
    <molecule id="Q9Y2C9-1"/>
</dbReference>
<dbReference type="RefSeq" id="NP_001381482.1">
    <molecule id="Q9Y2C9-1"/>
    <property type="nucleotide sequence ID" value="NM_001394553.1"/>
</dbReference>
<dbReference type="RefSeq" id="NP_006059.2">
    <molecule id="Q9Y2C9-1"/>
    <property type="nucleotide sequence ID" value="NM_006068.4"/>
</dbReference>
<dbReference type="RefSeq" id="XP_005262694.1">
    <molecule id="Q9Y2C9-1"/>
    <property type="nucleotide sequence ID" value="XM_005262637.6"/>
</dbReference>
<dbReference type="RefSeq" id="XP_011511914.1">
    <property type="nucleotide sequence ID" value="XM_011513612.2"/>
</dbReference>
<dbReference type="RefSeq" id="XP_011511915.1">
    <molecule id="Q9Y2C9-1"/>
    <property type="nucleotide sequence ID" value="XM_011513613.4"/>
</dbReference>
<dbReference type="RefSeq" id="XP_011511916.1">
    <property type="nucleotide sequence ID" value="XM_011513614.2"/>
</dbReference>
<dbReference type="RefSeq" id="XP_024309641.1">
    <molecule id="Q9Y2C9-1"/>
    <property type="nucleotide sequence ID" value="XM_024453873.2"/>
</dbReference>
<dbReference type="RefSeq" id="XP_047305452.1">
    <molecule id="Q9Y2C9-1"/>
    <property type="nucleotide sequence ID" value="XM_047449496.1"/>
</dbReference>
<dbReference type="RefSeq" id="XP_047305453.1">
    <molecule id="Q9Y2C9-1"/>
    <property type="nucleotide sequence ID" value="XM_047449497.1"/>
</dbReference>
<dbReference type="RefSeq" id="XP_047305454.1">
    <molecule id="Q9Y2C9-1"/>
    <property type="nucleotide sequence ID" value="XM_047449498.1"/>
</dbReference>
<dbReference type="PDB" id="4OM7">
    <property type="method" value="X-ray"/>
    <property type="resolution" value="2.20 A"/>
    <property type="chains" value="A/B=640-796"/>
</dbReference>
<dbReference type="PDBsum" id="4OM7"/>
<dbReference type="SMR" id="Q9Y2C9"/>
<dbReference type="BioGRID" id="115616">
    <property type="interactions" value="45"/>
</dbReference>
<dbReference type="ComplexPortal" id="CPX-892">
    <property type="entry name" value="TLR2-TLR6 toll-like receptor complex"/>
</dbReference>
<dbReference type="ComplexPortal" id="CPX-945">
    <property type="entry name" value="TLR4-TLR6 toll-like receptor complex"/>
</dbReference>
<dbReference type="CORUM" id="Q9Y2C9"/>
<dbReference type="FunCoup" id="Q9Y2C9">
    <property type="interactions" value="318"/>
</dbReference>
<dbReference type="IntAct" id="Q9Y2C9">
    <property type="interactions" value="10"/>
</dbReference>
<dbReference type="MINT" id="Q9Y2C9"/>
<dbReference type="STRING" id="9606.ENSP00000389600"/>
<dbReference type="BindingDB" id="Q9Y2C9"/>
<dbReference type="ChEMBL" id="CHEMBL3259477"/>
<dbReference type="DrugBank" id="DB16474">
    <property type="generic name" value="Pam2csk4"/>
</dbReference>
<dbReference type="GlyCosmos" id="Q9Y2C9">
    <property type="glycosylation" value="9 sites, No reported glycans"/>
</dbReference>
<dbReference type="GlyGen" id="Q9Y2C9">
    <property type="glycosylation" value="10 sites, 1 N-linked glycan (1 site), 1 O-linked glycan (1 site)"/>
</dbReference>
<dbReference type="iPTMnet" id="Q9Y2C9"/>
<dbReference type="PhosphoSitePlus" id="Q9Y2C9"/>
<dbReference type="BioMuta" id="TLR6"/>
<dbReference type="DMDM" id="296452933"/>
<dbReference type="jPOST" id="Q9Y2C9"/>
<dbReference type="MassIVE" id="Q9Y2C9"/>
<dbReference type="PaxDb" id="9606-ENSP00000389600"/>
<dbReference type="PeptideAtlas" id="Q9Y2C9"/>
<dbReference type="ProteomicsDB" id="85731">
    <molecule id="Q9Y2C9-1"/>
</dbReference>
<dbReference type="Antibodypedia" id="10461">
    <property type="antibodies" value="879 antibodies from 45 providers"/>
</dbReference>
<dbReference type="DNASU" id="10333"/>
<dbReference type="Ensembl" id="ENST00000381950.2">
    <molecule id="Q9Y2C9-1"/>
    <property type="protein sequence ID" value="ENSP00000371376.1"/>
    <property type="gene ID" value="ENSG00000174130.13"/>
</dbReference>
<dbReference type="Ensembl" id="ENST00000508254.6">
    <molecule id="Q9Y2C9-1"/>
    <property type="protein sequence ID" value="ENSP00000424718.2"/>
    <property type="gene ID" value="ENSG00000174130.13"/>
</dbReference>
<dbReference type="GeneID" id="10333"/>
<dbReference type="KEGG" id="hsa:10333"/>
<dbReference type="MANE-Select" id="ENST00000508254.6">
    <property type="protein sequence ID" value="ENSP00000424718.2"/>
    <property type="RefSeq nucleotide sequence ID" value="NM_006068.5"/>
    <property type="RefSeq protein sequence ID" value="NP_006059.2"/>
</dbReference>
<dbReference type="UCSC" id="uc010ifg.3">
    <molecule id="Q9Y2C9-1"/>
    <property type="organism name" value="human"/>
</dbReference>
<dbReference type="AGR" id="HGNC:16711"/>
<dbReference type="CTD" id="10333"/>
<dbReference type="DisGeNET" id="10333"/>
<dbReference type="GeneCards" id="TLR6"/>
<dbReference type="HGNC" id="HGNC:16711">
    <property type="gene designation" value="TLR6"/>
</dbReference>
<dbReference type="HPA" id="ENSG00000174130">
    <property type="expression patterns" value="Tissue enhanced (lymphoid)"/>
</dbReference>
<dbReference type="MIM" id="605403">
    <property type="type" value="gene"/>
</dbReference>
<dbReference type="neXtProt" id="NX_Q9Y2C9"/>
<dbReference type="OpenTargets" id="ENSG00000174130"/>
<dbReference type="PharmGKB" id="PA38183"/>
<dbReference type="VEuPathDB" id="HostDB:ENSG00000174130"/>
<dbReference type="eggNOG" id="KOG4641">
    <property type="taxonomic scope" value="Eukaryota"/>
</dbReference>
<dbReference type="GeneTree" id="ENSGT00940000162201"/>
<dbReference type="HOGENOM" id="CLU_006000_3_0_1"/>
<dbReference type="InParanoid" id="Q9Y2C9"/>
<dbReference type="OMA" id="SWNSLEY"/>
<dbReference type="OrthoDB" id="1081807at2759"/>
<dbReference type="PAN-GO" id="Q9Y2C9">
    <property type="GO annotations" value="8 GO annotations based on evolutionary models"/>
</dbReference>
<dbReference type="PhylomeDB" id="Q9Y2C9"/>
<dbReference type="TreeFam" id="TF351113"/>
<dbReference type="PathwayCommons" id="Q9Y2C9"/>
<dbReference type="Reactome" id="R-HSA-1236974">
    <property type="pathway name" value="ER-Phagosome pathway"/>
</dbReference>
<dbReference type="Reactome" id="R-HSA-166058">
    <property type="pathway name" value="MyD88:MAL(TIRAP) cascade initiated on plasma membrane"/>
</dbReference>
<dbReference type="Reactome" id="R-HSA-168188">
    <property type="pathway name" value="Toll Like Receptor TLR6:TLR2 Cascade"/>
</dbReference>
<dbReference type="Reactome" id="R-HSA-5602498">
    <property type="pathway name" value="MyD88 deficiency (TLR2/4)"/>
</dbReference>
<dbReference type="Reactome" id="R-HSA-5603041">
    <property type="pathway name" value="IRAK4 deficiency (TLR2/4)"/>
</dbReference>
<dbReference type="Reactome" id="R-HSA-5686938">
    <property type="pathway name" value="Regulation of TLR by endogenous ligand"/>
</dbReference>
<dbReference type="Reactome" id="R-HSA-9833110">
    <property type="pathway name" value="RSV-host interactions"/>
</dbReference>
<dbReference type="SignaLink" id="Q9Y2C9"/>
<dbReference type="BioGRID-ORCS" id="10333">
    <property type="hits" value="7 hits in 1149 CRISPR screens"/>
</dbReference>
<dbReference type="ChiTaRS" id="TLR6">
    <property type="organism name" value="human"/>
</dbReference>
<dbReference type="EvolutionaryTrace" id="Q9Y2C9"/>
<dbReference type="GeneWiki" id="TLR6"/>
<dbReference type="GenomeRNAi" id="10333"/>
<dbReference type="Pharos" id="Q9Y2C9">
    <property type="development level" value="Tbio"/>
</dbReference>
<dbReference type="PRO" id="PR:Q9Y2C9"/>
<dbReference type="Proteomes" id="UP000005640">
    <property type="component" value="Chromosome 4"/>
</dbReference>
<dbReference type="RNAct" id="Q9Y2C9">
    <property type="molecule type" value="protein"/>
</dbReference>
<dbReference type="Bgee" id="ENSG00000174130">
    <property type="expression patterns" value="Expressed in monocyte and 99 other cell types or tissues"/>
</dbReference>
<dbReference type="ExpressionAtlas" id="Q9Y2C9">
    <property type="expression patterns" value="baseline and differential"/>
</dbReference>
<dbReference type="GO" id="GO:0005794">
    <property type="term" value="C:Golgi apparatus"/>
    <property type="evidence" value="ECO:0000314"/>
    <property type="project" value="UniProtKB"/>
</dbReference>
<dbReference type="GO" id="GO:0045121">
    <property type="term" value="C:membrane raft"/>
    <property type="evidence" value="ECO:0000314"/>
    <property type="project" value="UniProtKB"/>
</dbReference>
<dbReference type="GO" id="GO:0030670">
    <property type="term" value="C:phagocytic vesicle membrane"/>
    <property type="evidence" value="ECO:0007669"/>
    <property type="project" value="UniProtKB-SubCell"/>
</dbReference>
<dbReference type="GO" id="GO:0005886">
    <property type="term" value="C:plasma membrane"/>
    <property type="evidence" value="ECO:0000318"/>
    <property type="project" value="GO_Central"/>
</dbReference>
<dbReference type="GO" id="GO:0043235">
    <property type="term" value="C:receptor complex"/>
    <property type="evidence" value="ECO:0000353"/>
    <property type="project" value="ARUK-UCL"/>
</dbReference>
<dbReference type="GO" id="GO:0035355">
    <property type="term" value="C:Toll-like receptor 2-Toll-like receptor 6 protein complex"/>
    <property type="evidence" value="ECO:0000314"/>
    <property type="project" value="UniProt"/>
</dbReference>
<dbReference type="GO" id="GO:0001540">
    <property type="term" value="F:amyloid-beta binding"/>
    <property type="evidence" value="ECO:0000305"/>
    <property type="project" value="ARUK-UCL"/>
</dbReference>
<dbReference type="GO" id="GO:0042498">
    <property type="term" value="F:diacyl lipopeptide binding"/>
    <property type="evidence" value="ECO:0007669"/>
    <property type="project" value="Ensembl"/>
</dbReference>
<dbReference type="GO" id="GO:0042802">
    <property type="term" value="F:identical protein binding"/>
    <property type="evidence" value="ECO:0000314"/>
    <property type="project" value="UniProtKB"/>
</dbReference>
<dbReference type="GO" id="GO:0071723">
    <property type="term" value="F:lipopeptide binding"/>
    <property type="evidence" value="ECO:0000250"/>
    <property type="project" value="UniProtKB"/>
</dbReference>
<dbReference type="GO" id="GO:0061809">
    <property type="term" value="F:NAD+ nucleosidase activity, cyclic ADP-ribose generating"/>
    <property type="evidence" value="ECO:0007669"/>
    <property type="project" value="UniProtKB-EC"/>
</dbReference>
<dbReference type="GO" id="GO:0046982">
    <property type="term" value="F:protein heterodimerization activity"/>
    <property type="evidence" value="ECO:0000353"/>
    <property type="project" value="ARUK-UCL"/>
</dbReference>
<dbReference type="GO" id="GO:0038023">
    <property type="term" value="F:signaling receptor activity"/>
    <property type="evidence" value="ECO:0000318"/>
    <property type="project" value="GO_Central"/>
</dbReference>
<dbReference type="GO" id="GO:0005102">
    <property type="term" value="F:signaling receptor binding"/>
    <property type="evidence" value="ECO:0000353"/>
    <property type="project" value="ARUK-UCL"/>
</dbReference>
<dbReference type="GO" id="GO:0035663">
    <property type="term" value="F:Toll-like receptor 2 binding"/>
    <property type="evidence" value="ECO:0000353"/>
    <property type="project" value="UniProtKB"/>
</dbReference>
<dbReference type="GO" id="GO:0004888">
    <property type="term" value="F:transmembrane signaling receptor activity"/>
    <property type="evidence" value="ECO:0007669"/>
    <property type="project" value="InterPro"/>
</dbReference>
<dbReference type="GO" id="GO:0007250">
    <property type="term" value="P:activation of NF-kappaB-inducing kinase activity"/>
    <property type="evidence" value="ECO:0000303"/>
    <property type="project" value="UniProtKB"/>
</dbReference>
<dbReference type="GO" id="GO:1904646">
    <property type="term" value="P:cellular response to amyloid-beta"/>
    <property type="evidence" value="ECO:0000314"/>
    <property type="project" value="ComplexPortal"/>
</dbReference>
<dbReference type="GO" id="GO:0071726">
    <property type="term" value="P:cellular response to diacyl bacterial lipopeptide"/>
    <property type="evidence" value="ECO:0000314"/>
    <property type="project" value="UniProtKB"/>
</dbReference>
<dbReference type="GO" id="GO:0140052">
    <property type="term" value="P:cellular response to oxidised low-density lipoprotein particle stimulus"/>
    <property type="evidence" value="ECO:0000314"/>
    <property type="project" value="ComplexPortal"/>
</dbReference>
<dbReference type="GO" id="GO:0042742">
    <property type="term" value="P:defense response to bacterium"/>
    <property type="evidence" value="ECO:0000304"/>
    <property type="project" value="ProtInc"/>
</dbReference>
<dbReference type="GO" id="GO:0042496">
    <property type="term" value="P:detection of diacyl bacterial lipopeptide"/>
    <property type="evidence" value="ECO:0000314"/>
    <property type="project" value="MGI"/>
</dbReference>
<dbReference type="GO" id="GO:0006955">
    <property type="term" value="P:immune response"/>
    <property type="evidence" value="ECO:0000304"/>
    <property type="project" value="ProtInc"/>
</dbReference>
<dbReference type="GO" id="GO:0006954">
    <property type="term" value="P:inflammatory response"/>
    <property type="evidence" value="ECO:0000318"/>
    <property type="project" value="GO_Central"/>
</dbReference>
<dbReference type="GO" id="GO:0045087">
    <property type="term" value="P:innate immune response"/>
    <property type="evidence" value="ECO:0000303"/>
    <property type="project" value="ComplexPortal"/>
</dbReference>
<dbReference type="GO" id="GO:0001774">
    <property type="term" value="P:microglial cell activation"/>
    <property type="evidence" value="ECO:0007669"/>
    <property type="project" value="Ensembl"/>
</dbReference>
<dbReference type="GO" id="GO:0002755">
    <property type="term" value="P:MyD88-dependent toll-like receptor signaling pathway"/>
    <property type="evidence" value="ECO:0000314"/>
    <property type="project" value="ComplexPortal"/>
</dbReference>
<dbReference type="GO" id="GO:0032717">
    <property type="term" value="P:negative regulation of interleukin-8 production"/>
    <property type="evidence" value="ECO:0000316"/>
    <property type="project" value="ARUK-UCL"/>
</dbReference>
<dbReference type="GO" id="GO:0034136">
    <property type="term" value="P:negative regulation of toll-like receptor 2 signaling pathway"/>
    <property type="evidence" value="ECO:0000316"/>
    <property type="project" value="ARUK-UCL"/>
</dbReference>
<dbReference type="GO" id="GO:0032720">
    <property type="term" value="P:negative regulation of tumor necrosis factor production"/>
    <property type="evidence" value="ECO:0007669"/>
    <property type="project" value="Ensembl"/>
</dbReference>
<dbReference type="GO" id="GO:0046209">
    <property type="term" value="P:nitric oxide metabolic process"/>
    <property type="evidence" value="ECO:0007669"/>
    <property type="project" value="Ensembl"/>
</dbReference>
<dbReference type="GO" id="GO:0043123">
    <property type="term" value="P:positive regulation of canonical NF-kappaB signal transduction"/>
    <property type="evidence" value="ECO:0000314"/>
    <property type="project" value="MGI"/>
</dbReference>
<dbReference type="GO" id="GO:1900017">
    <property type="term" value="P:positive regulation of cytokine production involved in inflammatory response"/>
    <property type="evidence" value="ECO:0000250"/>
    <property type="project" value="ARUK-UCL"/>
</dbReference>
<dbReference type="GO" id="GO:2001238">
    <property type="term" value="P:positive regulation of extrinsic apoptotic signaling pathway"/>
    <property type="evidence" value="ECO:0000250"/>
    <property type="project" value="ARUK-UCL"/>
</dbReference>
<dbReference type="GO" id="GO:0010628">
    <property type="term" value="P:positive regulation of gene expression"/>
    <property type="evidence" value="ECO:0000250"/>
    <property type="project" value="ARUK-UCL"/>
</dbReference>
<dbReference type="GO" id="GO:0050729">
    <property type="term" value="P:positive regulation of inflammatory response"/>
    <property type="evidence" value="ECO:0007669"/>
    <property type="project" value="Ensembl"/>
</dbReference>
<dbReference type="GO" id="GO:0032731">
    <property type="term" value="P:positive regulation of interleukin-1 beta production"/>
    <property type="evidence" value="ECO:0000250"/>
    <property type="project" value="UniProtKB"/>
</dbReference>
<dbReference type="GO" id="GO:0032755">
    <property type="term" value="P:positive regulation of interleukin-6 production"/>
    <property type="evidence" value="ECO:0000250"/>
    <property type="project" value="UniProtKB"/>
</dbReference>
<dbReference type="GO" id="GO:0043507">
    <property type="term" value="P:positive regulation of JUN kinase activity"/>
    <property type="evidence" value="ECO:0000314"/>
    <property type="project" value="MGI"/>
</dbReference>
<dbReference type="GO" id="GO:0043032">
    <property type="term" value="P:positive regulation of macrophage activation"/>
    <property type="evidence" value="ECO:0000250"/>
    <property type="project" value="ARUK-UCL"/>
</dbReference>
<dbReference type="GO" id="GO:0045429">
    <property type="term" value="P:positive regulation of nitric oxide biosynthetic process"/>
    <property type="evidence" value="ECO:0000250"/>
    <property type="project" value="ARUK-UCL"/>
</dbReference>
<dbReference type="GO" id="GO:1900227">
    <property type="term" value="P:positive regulation of NLRP3 inflammasome complex assembly"/>
    <property type="evidence" value="ECO:0000250"/>
    <property type="project" value="UniProtKB"/>
</dbReference>
<dbReference type="GO" id="GO:1903428">
    <property type="term" value="P:positive regulation of reactive oxygen species biosynthetic process"/>
    <property type="evidence" value="ECO:0000250"/>
    <property type="project" value="ARUK-UCL"/>
</dbReference>
<dbReference type="GO" id="GO:0007165">
    <property type="term" value="P:signal transduction"/>
    <property type="evidence" value="ECO:0000304"/>
    <property type="project" value="ProtInc"/>
</dbReference>
<dbReference type="GO" id="GO:0002224">
    <property type="term" value="P:toll-like receptor signaling pathway"/>
    <property type="evidence" value="ECO:0000318"/>
    <property type="project" value="GO_Central"/>
</dbReference>
<dbReference type="GO" id="GO:0038124">
    <property type="term" value="P:toll-like receptor TLR6:TLR2 signaling pathway"/>
    <property type="evidence" value="ECO:0000314"/>
    <property type="project" value="ComplexPortal"/>
</dbReference>
<dbReference type="GO" id="GO:0035666">
    <property type="term" value="P:TRIF-dependent toll-like receptor signaling pathway"/>
    <property type="evidence" value="ECO:0000250"/>
    <property type="project" value="ARUK-UCL"/>
</dbReference>
<dbReference type="FunFam" id="3.40.50.10140:FF:000001">
    <property type="entry name" value="Toll-like receptor 2"/>
    <property type="match status" value="1"/>
</dbReference>
<dbReference type="FunFam" id="3.80.10.10:FF:000046">
    <property type="entry name" value="Toll-like receptor 2"/>
    <property type="match status" value="1"/>
</dbReference>
<dbReference type="Gene3D" id="3.80.10.10">
    <property type="entry name" value="Ribonuclease Inhibitor"/>
    <property type="match status" value="1"/>
</dbReference>
<dbReference type="Gene3D" id="3.40.50.10140">
    <property type="entry name" value="Toll/interleukin-1 receptor homology (TIR) domain"/>
    <property type="match status" value="1"/>
</dbReference>
<dbReference type="InterPro" id="IPR000483">
    <property type="entry name" value="Cys-rich_flank_reg_C"/>
</dbReference>
<dbReference type="InterPro" id="IPR001611">
    <property type="entry name" value="Leu-rich_rpt"/>
</dbReference>
<dbReference type="InterPro" id="IPR003591">
    <property type="entry name" value="Leu-rich_rpt_typical-subtyp"/>
</dbReference>
<dbReference type="InterPro" id="IPR032675">
    <property type="entry name" value="LRR_dom_sf"/>
</dbReference>
<dbReference type="InterPro" id="IPR000157">
    <property type="entry name" value="TIR_dom"/>
</dbReference>
<dbReference type="InterPro" id="IPR017241">
    <property type="entry name" value="Toll-like_receptor"/>
</dbReference>
<dbReference type="InterPro" id="IPR035897">
    <property type="entry name" value="Toll_tir_struct_dom_sf"/>
</dbReference>
<dbReference type="PANTHER" id="PTHR24365">
    <property type="entry name" value="TOLL-LIKE RECEPTOR"/>
    <property type="match status" value="1"/>
</dbReference>
<dbReference type="PANTHER" id="PTHR24365:SF422">
    <property type="entry name" value="TOLL-LIKE RECEPTOR 6"/>
    <property type="match status" value="1"/>
</dbReference>
<dbReference type="Pfam" id="PF13855">
    <property type="entry name" value="LRR_8"/>
    <property type="match status" value="2"/>
</dbReference>
<dbReference type="Pfam" id="PF01463">
    <property type="entry name" value="LRRCT"/>
    <property type="match status" value="1"/>
</dbReference>
<dbReference type="Pfam" id="PF01582">
    <property type="entry name" value="TIR"/>
    <property type="match status" value="1"/>
</dbReference>
<dbReference type="PIRSF" id="PIRSF037595">
    <property type="entry name" value="Toll-like_receptor"/>
    <property type="match status" value="1"/>
</dbReference>
<dbReference type="PRINTS" id="PR01537">
    <property type="entry name" value="INTRLKN1R1F"/>
</dbReference>
<dbReference type="PRINTS" id="PR00019">
    <property type="entry name" value="LEURICHRPT"/>
</dbReference>
<dbReference type="SMART" id="SM00369">
    <property type="entry name" value="LRR_TYP"/>
    <property type="match status" value="5"/>
</dbReference>
<dbReference type="SMART" id="SM00082">
    <property type="entry name" value="LRRCT"/>
    <property type="match status" value="1"/>
</dbReference>
<dbReference type="SMART" id="SM00255">
    <property type="entry name" value="TIR"/>
    <property type="match status" value="1"/>
</dbReference>
<dbReference type="SUPFAM" id="SSF52058">
    <property type="entry name" value="L domain-like"/>
    <property type="match status" value="2"/>
</dbReference>
<dbReference type="SUPFAM" id="SSF52200">
    <property type="entry name" value="Toll/Interleukin receptor TIR domain"/>
    <property type="match status" value="1"/>
</dbReference>
<dbReference type="PROSITE" id="PS51450">
    <property type="entry name" value="LRR"/>
    <property type="match status" value="9"/>
</dbReference>
<dbReference type="PROSITE" id="PS50104">
    <property type="entry name" value="TIR"/>
    <property type="match status" value="1"/>
</dbReference>
<comment type="function">
    <text evidence="6 9 11">Participates in the innate immune response to Gram-positive bacteria and fungi. Specifically recognizes diacylated and, to a lesser extent, triacylated lipopeptides (PubMed:20037584). In response to diacylated lipopeptides, forms the activation cluster TLR2:TLR6:CD14:CD36, this cluster triggers signaling from the cell surface and subsequently is targeted to the Golgi in a lipid-raft dependent pathway (PubMed:16880211). Acts via MYD88 and TRAF6, leading to NF-kappa-B activation, cytokine secretion and the inflammatory response. Recognizes mycoplasmal macrophage-activating lipopeptide-2kD (MALP-2), soluble tuberculosis factor (STF), phenol-soluble modulin (PSM) and B.burgdorferi outer surface protein A lipoprotein (OspA-L) cooperatively with TLR2 (PubMed:11441107). In complex with TLR4, promotes sterile inflammation in monocytes/macrophages in response to oxidized low-density lipoprotein (oxLDL) or amyloid-beta 42. In this context, the initial signal is provided by oxLDL- or amyloid-beta 42-binding to CD36. This event induces the formation of a heterodimer of TLR4 and TLR6, which is rapidly internalized and triggers inflammatory response, leading to the NF-kappa-B-dependent production of CXCL1, CXCL2 and CCL9 cytokines, via MYD88 signaling pathway, and CCL5 cytokine, via TICAM1 signaling pathway, as well as IL1B secretion (PubMed:11441107, PubMed:20037584).</text>
</comment>
<comment type="subunit">
    <text evidence="9 11 13 16">Homodimer (via cytoplasmic TIR domain) (PubMed:25088687). Heterodimer with TLR2 via their respective extracellular domains (PubMed:16880211). Binds MYD88 via their respective TIR domains (Probable). Interacts with CD36, following CD36 stimulation by oxLDL or amyloid-beta 42, and forms a heterodimer with TLR4. The trimeric complex is internalized and triggers inflammatory response. LYN kinase activity facilitates TLR4:TLR6 heterodimerization and signal initiation (PubMed:20037584). The heterodimer TLR2:TLR6 interacts with CD14 and CD36 in response to triacylated lipopeptides (PubMed:16880211).</text>
</comment>
<comment type="interaction">
    <interactant intactId="EBI-13940779">
        <id>Q9Y2C9</id>
    </interactant>
    <interactant intactId="EBI-9009517">
        <id>Q15399</id>
        <label>TLR1</label>
    </interactant>
    <organismsDiffer>false</organismsDiffer>
    <experiments>3</experiments>
</comment>
<comment type="interaction">
    <interactant intactId="EBI-13940779">
        <id>Q9Y2C9</id>
    </interactant>
    <interactant intactId="EBI-973722">
        <id>O60603</id>
        <label>TLR2</label>
    </interactant>
    <organismsDiffer>false</organismsDiffer>
    <experiments>5</experiments>
</comment>
<comment type="interaction">
    <interactant intactId="EBI-13940779">
        <id>Q9Y2C9</id>
    </interactant>
    <interactant intactId="EBI-528701">
        <id>O00206</id>
        <label>TLR4</label>
    </interactant>
    <organismsDiffer>false</organismsDiffer>
    <experiments>2</experiments>
</comment>
<comment type="interaction">
    <interactant intactId="EBI-13940779">
        <id>Q9Y2C9</id>
    </interactant>
    <interactant intactId="EBI-13940779">
        <id>Q9Y2C9</id>
        <label>TLR6</label>
    </interactant>
    <organismsDiffer>false</organismsDiffer>
    <experiments>4</experiments>
</comment>
<comment type="subcellular location">
    <subcellularLocation>
        <location evidence="11">Cell membrane</location>
        <topology evidence="4">Single-pass type I membrane protein</topology>
    </subcellularLocation>
    <subcellularLocation>
        <location evidence="3">Cytoplasmic vesicle</location>
        <location evidence="3">Phagosome membrane</location>
        <topology evidence="4">Single-pass type I membrane protein</topology>
    </subcellularLocation>
    <subcellularLocation>
        <location evidence="9">Membrane raft</location>
    </subcellularLocation>
    <subcellularLocation>
        <location evidence="9">Golgi apparatus</location>
    </subcellularLocation>
    <text evidence="9 11">Upon complex formation with CD36 and TLR4, internalized through dynamin-dependent endocytosis. Does not reside in lipid rafts before stimulation but accumulates increasingly in the raft upon the presence of the microbial ligand. In response to diacylated lipoproteins, TLR2:TLR6 heterodimers are recruited in lipid rafts, this recruitment determine the intracellular targeting to the Golgi apparatus (PubMed:16880211).</text>
</comment>
<comment type="alternative products">
    <event type="alternative splicing"/>
    <isoform>
        <id>Q9Y2C9-1</id>
        <name>1</name>
        <sequence type="displayed"/>
    </isoform>
    <isoform>
        <id>Q9Y2C9-2</id>
        <name>2</name>
        <sequence type="described" ref="VSP_056851"/>
    </isoform>
</comment>
<comment type="tissue specificity">
    <text>Detected in monocytes, CD11c+ immature dendritic cells, plasmacytoid pre-dendritic cells and dermal microvessel endothelial cells.</text>
</comment>
<comment type="similarity">
    <text evidence="16">Belongs to the Toll-like receptor family.</text>
</comment>
<comment type="caution">
    <text evidence="2 16">In some plant proteins and in human SARM1, the TIR domain has NAD(+) hydrolase (NADase) activity (By similarity). However, despite the presence of the catalytic Asp residue, the isolated TIR domain of human TLR4 lacks NADase activity (By similarity). Based on this, it is unlikely that Toll-like receptors have NADase activity.</text>
</comment>
<reference key="1">
    <citation type="journal article" date="1999" name="Gene">
        <title>TLR6: a novel member of an expanding Toll-like receptor family.</title>
        <authorList>
            <person name="Takeuchi O."/>
            <person name="Kawai T."/>
            <person name="Sanjo H."/>
            <person name="Copeland N.G."/>
            <person name="Gilbert D.J."/>
            <person name="Jenkins N.A."/>
            <person name="Takeda K."/>
            <person name="Akira S."/>
        </authorList>
    </citation>
    <scope>NUCLEOTIDE SEQUENCE [MRNA] (ISOFORM 1)</scope>
    <source>
        <tissue>Placenta</tissue>
    </source>
</reference>
<reference key="2">
    <citation type="journal article" date="2008" name="Immunogenetics">
        <title>Natural selection in the TLR-related genes in the course of primate evolution.</title>
        <authorList>
            <person name="Nakajima T."/>
            <person name="Ohtani H."/>
            <person name="Satta Y."/>
            <person name="Uno Y."/>
            <person name="Akari H."/>
            <person name="Ishida T."/>
            <person name="Kimura A."/>
        </authorList>
    </citation>
    <scope>NUCLEOTIDE SEQUENCE [MRNA] (ISOFORM 1)</scope>
    <scope>VARIANT PRO-249</scope>
</reference>
<reference key="3">
    <citation type="submission" date="2007-10" db="EMBL/GenBank/DDBJ databases">
        <title>The novel allele of toll-like receptor 6 gene.</title>
        <authorList>
            <person name="Liu Z."/>
            <person name="Xiao W."/>
            <person name="Wang J."/>
            <person name="Li N."/>
            <person name="Tai Y."/>
        </authorList>
    </citation>
    <scope>NUCLEOTIDE SEQUENCE [GENOMIC DNA]</scope>
    <scope>VARIANTS THR-120 AND PRO-249; MET-327</scope>
</reference>
<reference key="4">
    <citation type="journal article" date="2005" name="Nature">
        <title>Generation and annotation of the DNA sequences of human chromosomes 2 and 4.</title>
        <authorList>
            <person name="Hillier L.W."/>
            <person name="Graves T.A."/>
            <person name="Fulton R.S."/>
            <person name="Fulton L.A."/>
            <person name="Pepin K.H."/>
            <person name="Minx P."/>
            <person name="Wagner-McPherson C."/>
            <person name="Layman D."/>
            <person name="Wylie K."/>
            <person name="Sekhon M."/>
            <person name="Becker M.C."/>
            <person name="Fewell G.A."/>
            <person name="Delehaunty K.D."/>
            <person name="Miner T.L."/>
            <person name="Nash W.E."/>
            <person name="Kremitzki C."/>
            <person name="Oddy L."/>
            <person name="Du H."/>
            <person name="Sun H."/>
            <person name="Bradshaw-Cordum H."/>
            <person name="Ali J."/>
            <person name="Carter J."/>
            <person name="Cordes M."/>
            <person name="Harris A."/>
            <person name="Isak A."/>
            <person name="van Brunt A."/>
            <person name="Nguyen C."/>
            <person name="Du F."/>
            <person name="Courtney L."/>
            <person name="Kalicki J."/>
            <person name="Ozersky P."/>
            <person name="Abbott S."/>
            <person name="Armstrong J."/>
            <person name="Belter E.A."/>
            <person name="Caruso L."/>
            <person name="Cedroni M."/>
            <person name="Cotton M."/>
            <person name="Davidson T."/>
            <person name="Desai A."/>
            <person name="Elliott G."/>
            <person name="Erb T."/>
            <person name="Fronick C."/>
            <person name="Gaige T."/>
            <person name="Haakenson W."/>
            <person name="Haglund K."/>
            <person name="Holmes A."/>
            <person name="Harkins R."/>
            <person name="Kim K."/>
            <person name="Kruchowski S.S."/>
            <person name="Strong C.M."/>
            <person name="Grewal N."/>
            <person name="Goyea E."/>
            <person name="Hou S."/>
            <person name="Levy A."/>
            <person name="Martinka S."/>
            <person name="Mead K."/>
            <person name="McLellan M.D."/>
            <person name="Meyer R."/>
            <person name="Randall-Maher J."/>
            <person name="Tomlinson C."/>
            <person name="Dauphin-Kohlberg S."/>
            <person name="Kozlowicz-Reilly A."/>
            <person name="Shah N."/>
            <person name="Swearengen-Shahid S."/>
            <person name="Snider J."/>
            <person name="Strong J.T."/>
            <person name="Thompson J."/>
            <person name="Yoakum M."/>
            <person name="Leonard S."/>
            <person name="Pearman C."/>
            <person name="Trani L."/>
            <person name="Radionenko M."/>
            <person name="Waligorski J.E."/>
            <person name="Wang C."/>
            <person name="Rock S.M."/>
            <person name="Tin-Wollam A.-M."/>
            <person name="Maupin R."/>
            <person name="Latreille P."/>
            <person name="Wendl M.C."/>
            <person name="Yang S.-P."/>
            <person name="Pohl C."/>
            <person name="Wallis J.W."/>
            <person name="Spieth J."/>
            <person name="Bieri T.A."/>
            <person name="Berkowicz N."/>
            <person name="Nelson J.O."/>
            <person name="Osborne J."/>
            <person name="Ding L."/>
            <person name="Meyer R."/>
            <person name="Sabo A."/>
            <person name="Shotland Y."/>
            <person name="Sinha P."/>
            <person name="Wohldmann P.E."/>
            <person name="Cook L.L."/>
            <person name="Hickenbotham M.T."/>
            <person name="Eldred J."/>
            <person name="Williams D."/>
            <person name="Jones T.A."/>
            <person name="She X."/>
            <person name="Ciccarelli F.D."/>
            <person name="Izaurralde E."/>
            <person name="Taylor J."/>
            <person name="Schmutz J."/>
            <person name="Myers R.M."/>
            <person name="Cox D.R."/>
            <person name="Huang X."/>
            <person name="McPherson J.D."/>
            <person name="Mardis E.R."/>
            <person name="Clifton S.W."/>
            <person name="Warren W.C."/>
            <person name="Chinwalla A.T."/>
            <person name="Eddy S.R."/>
            <person name="Marra M.A."/>
            <person name="Ovcharenko I."/>
            <person name="Furey T.S."/>
            <person name="Miller W."/>
            <person name="Eichler E.E."/>
            <person name="Bork P."/>
            <person name="Suyama M."/>
            <person name="Torrents D."/>
            <person name="Waterston R.H."/>
            <person name="Wilson R.K."/>
        </authorList>
    </citation>
    <scope>NUCLEOTIDE SEQUENCE [LARGE SCALE GENOMIC DNA]</scope>
    <scope>VARIANT PRO-249</scope>
</reference>
<reference key="5">
    <citation type="submission" date="2005-07" db="EMBL/GenBank/DDBJ databases">
        <authorList>
            <person name="Mural R.J."/>
            <person name="Istrail S."/>
            <person name="Sutton G.G."/>
            <person name="Florea L."/>
            <person name="Halpern A.L."/>
            <person name="Mobarry C.M."/>
            <person name="Lippert R."/>
            <person name="Walenz B."/>
            <person name="Shatkay H."/>
            <person name="Dew I."/>
            <person name="Miller J.R."/>
            <person name="Flanigan M.J."/>
            <person name="Edwards N.J."/>
            <person name="Bolanos R."/>
            <person name="Fasulo D."/>
            <person name="Halldorsson B.V."/>
            <person name="Hannenhalli S."/>
            <person name="Turner R."/>
            <person name="Yooseph S."/>
            <person name="Lu F."/>
            <person name="Nusskern D.R."/>
            <person name="Shue B.C."/>
            <person name="Zheng X.H."/>
            <person name="Zhong F."/>
            <person name="Delcher A.L."/>
            <person name="Huson D.H."/>
            <person name="Kravitz S.A."/>
            <person name="Mouchard L."/>
            <person name="Reinert K."/>
            <person name="Remington K.A."/>
            <person name="Clark A.G."/>
            <person name="Waterman M.S."/>
            <person name="Eichler E.E."/>
            <person name="Adams M.D."/>
            <person name="Hunkapiller M.W."/>
            <person name="Myers E.W."/>
            <person name="Venter J.C."/>
        </authorList>
    </citation>
    <scope>NUCLEOTIDE SEQUENCE [LARGE SCALE GENOMIC DNA]</scope>
</reference>
<reference key="6">
    <citation type="journal article" date="2004" name="Genome Res.">
        <title>The status, quality, and expansion of the NIH full-length cDNA project: the Mammalian Gene Collection (MGC).</title>
        <authorList>
            <consortium name="The MGC Project Team"/>
        </authorList>
    </citation>
    <scope>NUCLEOTIDE SEQUENCE [LARGE SCALE MRNA] (ISOFORM 2)</scope>
    <scope>VARIANT PRO-249</scope>
</reference>
<reference key="7">
    <citation type="journal article" date="2001" name="J. Immunol.">
        <title>Cooperation of Toll-like receptor 2 and 6 for cellular activation by soluble tuberculosis factor and Borrelia burgdorferi outer surface protein A lipoprotein: role of Toll-interacting protein and IL-1 receptor signaling molecules in Toll-like receptor 2 signaling.</title>
        <authorList>
            <person name="Bulut Y."/>
            <person name="Faure E."/>
            <person name="Thomas L."/>
            <person name="Equils O."/>
            <person name="Arditi M."/>
        </authorList>
    </citation>
    <scope>FUNCTION</scope>
</reference>
<reference key="8">
    <citation type="journal article" date="2006" name="J. Biol. Chem.">
        <title>Membrane sorting of toll-like receptor (TLR)-2/6 and TLR2/1 heterodimers at the cell surface determines heterotypic associations with CD36 and intracellular targeting.</title>
        <authorList>
            <person name="Triantafilou M."/>
            <person name="Gamper F.G."/>
            <person name="Haston R.M."/>
            <person name="Mouratis M.A."/>
            <person name="Morath S."/>
            <person name="Hartung T."/>
            <person name="Triantafilou K."/>
        </authorList>
    </citation>
    <scope>FUNCTION</scope>
    <scope>SUBCELLULAR LOCATION</scope>
    <scope>INTERACTION WITH TLR2; CD14 AND CD36</scope>
</reference>
<reference key="9">
    <citation type="journal article" date="2010" name="Nat. Immunol.">
        <title>CD36 ligands promote sterile inflammation through assembly of a Toll-like receptor 4 and 6 heterodimer.</title>
        <authorList>
            <person name="Stewart C.R."/>
            <person name="Stuart L.M."/>
            <person name="Wilkinson K."/>
            <person name="van Gils J.M."/>
            <person name="Deng J."/>
            <person name="Halle A."/>
            <person name="Rayner K.J."/>
            <person name="Boyer L."/>
            <person name="Zhong R."/>
            <person name="Frazier W.A."/>
            <person name="Lacy-Hulbert A."/>
            <person name="El Khoury J."/>
            <person name="Golenbock D.T."/>
            <person name="Moore K.J."/>
        </authorList>
    </citation>
    <scope>FUNCTION</scope>
    <scope>INTERACTION WITH CD36 AND TLR4</scope>
    <scope>SUBCELLULAR LOCATION</scope>
</reference>
<reference key="10">
    <citation type="journal article" date="2014" name="J. Mol. Biol.">
        <title>Crystal structure of TIR domain of TLR6 reveals novel dimeric interface of TIR-TIR interaction for toll-like receptor signaling pathway.</title>
        <authorList>
            <person name="Jang T.H."/>
            <person name="Park H.H."/>
        </authorList>
    </citation>
    <scope>X-RAY CRYSTALLOGRAPHY (2.20 ANGSTROMS) OF 640-782</scope>
    <scope>SUBUNIT</scope>
    <scope>MUTAGENESIS OF PHE-678; CYS-712 AND LEU-716</scope>
</reference>
<reference key="11">
    <citation type="journal article" date="2011" name="Hum. Mutat.">
        <title>Functional characterization of naturally occurring genetic variants in the human TLR1-2-6 gene family.</title>
        <authorList>
            <person name="Ben-Ali M."/>
            <person name="Corre B."/>
            <person name="Manry J."/>
            <person name="Barreiro L.B."/>
            <person name="Quach H."/>
            <person name="Boniotto M."/>
            <person name="Pellegrini S."/>
            <person name="Quintana-Murci L."/>
        </authorList>
    </citation>
    <scope>VARIANTS THR-120; VAL-128; PRO-194; THR-210; GLY-210; LYS-247; PRO-249; VAL-283; MET-327; ALA-427; ALA-442; ILE-465; THR-474; VAL-474; VAL-592; THR-690 AND HIS-708</scope>
    <scope>CHARACTERIZATION OF VARIANTS VAL-128; PRO-194; VAL-474; THR-690 AND HIS-708</scope>
</reference>
<evidence type="ECO:0000250" key="1"/>
<evidence type="ECO:0000250" key="2">
    <source>
        <dbReference type="UniProtKB" id="O00206"/>
    </source>
</evidence>
<evidence type="ECO:0000250" key="3">
    <source>
        <dbReference type="UniProtKB" id="Q9EPW9"/>
    </source>
</evidence>
<evidence type="ECO:0000255" key="4"/>
<evidence type="ECO:0000255" key="5">
    <source>
        <dbReference type="PROSITE-ProRule" id="PRU00204"/>
    </source>
</evidence>
<evidence type="ECO:0000269" key="6">
    <source>
    </source>
</evidence>
<evidence type="ECO:0000269" key="7">
    <source>
    </source>
</evidence>
<evidence type="ECO:0000269" key="8">
    <source>
    </source>
</evidence>
<evidence type="ECO:0000269" key="9">
    <source>
    </source>
</evidence>
<evidence type="ECO:0000269" key="10">
    <source>
    </source>
</evidence>
<evidence type="ECO:0000269" key="11">
    <source>
    </source>
</evidence>
<evidence type="ECO:0000269" key="12">
    <source>
    </source>
</evidence>
<evidence type="ECO:0000269" key="13">
    <source>
    </source>
</evidence>
<evidence type="ECO:0000269" key="14">
    <source ref="3"/>
</evidence>
<evidence type="ECO:0000303" key="15">
    <source>
    </source>
</evidence>
<evidence type="ECO:0000305" key="16"/>
<evidence type="ECO:0007829" key="17">
    <source>
        <dbReference type="PDB" id="4OM7"/>
    </source>
</evidence>
<name>TLR6_HUMAN</name>
<feature type="signal peptide" evidence="4">
    <location>
        <begin position="1"/>
        <end position="31"/>
    </location>
</feature>
<feature type="chain" id="PRO_0000034731" description="Toll-like receptor 6">
    <location>
        <begin position="32"/>
        <end position="796"/>
    </location>
</feature>
<feature type="topological domain" description="Extracellular" evidence="4">
    <location>
        <begin position="32"/>
        <end position="586"/>
    </location>
</feature>
<feature type="transmembrane region" description="Helical" evidence="4">
    <location>
        <begin position="587"/>
        <end position="607"/>
    </location>
</feature>
<feature type="topological domain" description="Cytoplasmic" evidence="4">
    <location>
        <begin position="608"/>
        <end position="796"/>
    </location>
</feature>
<feature type="repeat" description="LRR 1">
    <location>
        <begin position="54"/>
        <end position="77"/>
    </location>
</feature>
<feature type="repeat" description="LRR 2">
    <location>
        <begin position="78"/>
        <end position="101"/>
    </location>
</feature>
<feature type="repeat" description="LRR 3">
    <location>
        <begin position="102"/>
        <end position="122"/>
    </location>
</feature>
<feature type="repeat" description="LRR 4">
    <location>
        <begin position="123"/>
        <end position="147"/>
    </location>
</feature>
<feature type="repeat" description="LRR 5">
    <location>
        <begin position="148"/>
        <end position="168"/>
    </location>
</feature>
<feature type="repeat" description="LRR 6">
    <location>
        <begin position="169"/>
        <end position="196"/>
    </location>
</feature>
<feature type="repeat" description="LRR 7">
    <location>
        <begin position="197"/>
        <end position="219"/>
    </location>
</feature>
<feature type="repeat" description="LRR 8">
    <location>
        <begin position="220"/>
        <end position="250"/>
    </location>
</feature>
<feature type="repeat" description="LRR 9">
    <location>
        <begin position="251"/>
        <end position="277"/>
    </location>
</feature>
<feature type="repeat" description="LRR 10">
    <location>
        <begin position="278"/>
        <end position="303"/>
    </location>
</feature>
<feature type="repeat" description="LRR 11">
    <location>
        <begin position="304"/>
        <end position="330"/>
    </location>
</feature>
<feature type="repeat" description="LRR 12">
    <location>
        <begin position="331"/>
        <end position="354"/>
    </location>
</feature>
<feature type="repeat" description="LRR 13">
    <location>
        <begin position="355"/>
        <end position="378"/>
    </location>
</feature>
<feature type="repeat" description="LRR 14">
    <location>
        <begin position="379"/>
        <end position="404"/>
    </location>
</feature>
<feature type="repeat" description="LRR 15">
    <location>
        <begin position="405"/>
        <end position="429"/>
    </location>
</feature>
<feature type="repeat" description="LRR 16">
    <location>
        <begin position="430"/>
        <end position="450"/>
    </location>
</feature>
<feature type="repeat" description="LRR 17">
    <location>
        <begin position="451"/>
        <end position="474"/>
    </location>
</feature>
<feature type="repeat" description="LRR 18">
    <location>
        <begin position="475"/>
        <end position="496"/>
    </location>
</feature>
<feature type="repeat" description="LRR 19">
    <location>
        <begin position="497"/>
        <end position="520"/>
    </location>
</feature>
<feature type="domain" description="LRRCT">
    <location>
        <begin position="521"/>
        <end position="575"/>
    </location>
</feature>
<feature type="domain" description="TIR" evidence="5">
    <location>
        <begin position="640"/>
        <end position="781"/>
    </location>
</feature>
<feature type="glycosylation site" description="N-linked (GlcNAc...) asparagine" evidence="4">
    <location>
        <position position="144"/>
    </location>
</feature>
<feature type="glycosylation site" description="N-linked (GlcNAc...) asparagine" evidence="4">
    <location>
        <position position="186"/>
    </location>
</feature>
<feature type="glycosylation site" description="N-linked (GlcNAc...) asparagine" evidence="4">
    <location>
        <position position="214"/>
    </location>
</feature>
<feature type="glycosylation site" description="N-linked (GlcNAc...) asparagine" evidence="4">
    <location>
        <position position="253"/>
    </location>
</feature>
<feature type="glycosylation site" description="N-linked (GlcNAc...) asparagine" evidence="4">
    <location>
        <position position="285"/>
    </location>
</feature>
<feature type="glycosylation site" description="N-linked (GlcNAc...) asparagine" evidence="4">
    <location>
        <position position="359"/>
    </location>
</feature>
<feature type="glycosylation site" description="N-linked (GlcNAc...) asparagine" evidence="4">
    <location>
        <position position="423"/>
    </location>
</feature>
<feature type="glycosylation site" description="N-linked (GlcNAc...) asparagine" evidence="4">
    <location>
        <position position="434"/>
    </location>
</feature>
<feature type="glycosylation site" description="N-linked (GlcNAc...) asparagine" evidence="4">
    <location>
        <position position="583"/>
    </location>
</feature>
<feature type="disulfide bond" evidence="1">
    <location>
        <begin position="117"/>
        <end position="139"/>
    </location>
</feature>
<feature type="disulfide bond" evidence="1">
    <location>
        <begin position="235"/>
        <end position="265"/>
    </location>
</feature>
<feature type="disulfide bond" evidence="1">
    <location>
        <begin position="348"/>
        <end position="373"/>
    </location>
</feature>
<feature type="disulfide bond" evidence="1">
    <location>
        <begin position="424"/>
        <end position="447"/>
    </location>
</feature>
<feature type="splice variant" id="VSP_056851" description="In isoform 2." evidence="15">
    <location>
        <begin position="383"/>
        <end position="698"/>
    </location>
</feature>
<feature type="sequence variant" id="VAR_057289" description="In dbSNP:rs5743808." evidence="12 14">
    <original>I</original>
    <variation>T</variation>
    <location>
        <position position="120"/>
    </location>
</feature>
<feature type="sequence variant" id="VAR_066352" description="Impairs the ability to induce NF-kappa-B activation; dbSNP:rs137853178." evidence="12">
    <original>L</original>
    <variation>V</variation>
    <location>
        <position position="128"/>
    </location>
</feature>
<feature type="sequence variant" id="VAR_057290" description="Impairs the ability to induce NF-kappa-B activation; dbSNP:rs5743809." evidence="12">
    <original>L</original>
    <variation>P</variation>
    <location>
        <position position="194"/>
    </location>
</feature>
<feature type="sequence variant" id="VAR_066353" description="In dbSNP:rs137853180." evidence="12">
    <original>A</original>
    <variation>G</variation>
    <location>
        <position position="210"/>
    </location>
</feature>
<feature type="sequence variant" id="VAR_066354" description="In dbSNP:rs137853179." evidence="12">
    <original>A</original>
    <variation>T</variation>
    <location>
        <position position="210"/>
    </location>
</feature>
<feature type="sequence variant" id="VAR_057291" description="In dbSNP:rs35220466." evidence="12">
    <original>R</original>
    <variation>K</variation>
    <location>
        <position position="247"/>
    </location>
</feature>
<feature type="sequence variant" id="VAR_063110" description="In dbSNP:rs5743810." evidence="7 8 10 12 14">
    <original>S</original>
    <variation>P</variation>
    <location>
        <position position="249"/>
    </location>
</feature>
<feature type="sequence variant" id="VAR_066355" description="In dbSNP:rs137853181." evidence="12">
    <original>I</original>
    <variation>V</variation>
    <location>
        <position position="283"/>
    </location>
</feature>
<feature type="sequence variant" id="VAR_057292" description="In dbSNP:rs3796508." evidence="12 14">
    <original>V</original>
    <variation>M</variation>
    <location>
        <position position="327"/>
    </location>
</feature>
<feature type="sequence variant" id="VAR_057293" description="In dbSNP:rs5743813.">
    <original>H</original>
    <variation>Y</variation>
    <location>
        <position position="345"/>
    </location>
</feature>
<feature type="sequence variant" id="VAR_057294" description="In dbSNP:rs5743815." evidence="12">
    <original>V</original>
    <variation>A</variation>
    <location>
        <position position="427"/>
    </location>
</feature>
<feature type="sequence variant" id="VAR_066356" description="In dbSNP:rs137853182." evidence="12">
    <original>D</original>
    <variation>A</variation>
    <location>
        <position position="442"/>
    </location>
</feature>
<feature type="sequence variant" id="VAR_057295" description="In dbSNP:rs5743816." evidence="12">
    <original>V</original>
    <variation>I</variation>
    <location>
        <position position="465"/>
    </location>
</feature>
<feature type="sequence variant" id="VAR_057296" description="In dbSNP:rs5743817." evidence="12">
    <original>A</original>
    <variation>T</variation>
    <location>
        <position position="474"/>
    </location>
</feature>
<feature type="sequence variant" id="VAR_066357" description="Impairs the ability to induce NF-kappa-B activation; dbSNP:rs1302799168." evidence="12">
    <original>A</original>
    <variation>V</variation>
    <location>
        <position position="474"/>
    </location>
</feature>
<feature type="sequence variant" id="VAR_066358" description="In dbSNP:rs75244616." evidence="12">
    <original>G</original>
    <variation>V</variation>
    <location>
        <position position="592"/>
    </location>
</feature>
<feature type="sequence variant" id="VAR_066359" description="Impairs the ability to induce NF-kappa-B activation; dbSNP:rs114855575." evidence="12">
    <original>N</original>
    <variation>T</variation>
    <location>
        <position position="690"/>
    </location>
</feature>
<feature type="sequence variant" id="VAR_066360" description="Impairs the ability to induce NF-kappa-B activation; dbSNP:rs137853183." evidence="12">
    <original>Q</original>
    <variation>H</variation>
    <location>
        <position position="708"/>
    </location>
</feature>
<feature type="sequence variant" id="VAR_057297" description="In dbSNP:rs5743822.">
    <original>M</original>
    <variation>V</variation>
    <location>
        <position position="783"/>
    </location>
</feature>
<feature type="mutagenesis site" description="Does not inhibit homodimer formation." evidence="13">
    <original>F</original>
    <variation>A</variation>
    <location>
        <position position="678"/>
    </location>
</feature>
<feature type="mutagenesis site" description="Inhibits homodimer formation." evidence="13">
    <original>C</original>
    <variation>R</variation>
    <location>
        <position position="712"/>
    </location>
</feature>
<feature type="mutagenesis site" description="Inhibits homodimer formation." evidence="13">
    <original>L</original>
    <variation>R</variation>
    <location>
        <position position="716"/>
    </location>
</feature>
<feature type="strand" evidence="17">
    <location>
        <begin position="642"/>
        <end position="647"/>
    </location>
</feature>
<feature type="helix" evidence="17">
    <location>
        <begin position="650"/>
        <end position="652"/>
    </location>
</feature>
<feature type="helix" evidence="17">
    <location>
        <begin position="653"/>
        <end position="658"/>
    </location>
</feature>
<feature type="helix" evidence="17">
    <location>
        <begin position="660"/>
        <end position="666"/>
    </location>
</feature>
<feature type="helix" evidence="17">
    <location>
        <begin position="674"/>
        <end position="677"/>
    </location>
</feature>
<feature type="helix" evidence="17">
    <location>
        <begin position="684"/>
        <end position="694"/>
    </location>
</feature>
<feature type="strand" evidence="17">
    <location>
        <begin position="695"/>
        <end position="702"/>
    </location>
</feature>
<feature type="helix" evidence="17">
    <location>
        <begin position="704"/>
        <end position="709"/>
    </location>
</feature>
<feature type="helix" evidence="17">
    <location>
        <begin position="711"/>
        <end position="717"/>
    </location>
</feature>
<feature type="helix" evidence="17">
    <location>
        <begin position="722"/>
        <end position="724"/>
    </location>
</feature>
<feature type="strand" evidence="17">
    <location>
        <begin position="725"/>
        <end position="727"/>
    </location>
</feature>
<feature type="strand" evidence="17">
    <location>
        <begin position="731"/>
        <end position="737"/>
    </location>
</feature>
<feature type="helix" evidence="17">
    <location>
        <begin position="741"/>
        <end position="743"/>
    </location>
</feature>
<feature type="helix" evidence="17">
    <location>
        <begin position="749"/>
        <end position="757"/>
    </location>
</feature>
<feature type="helix" evidence="17">
    <location>
        <begin position="772"/>
        <end position="780"/>
    </location>
</feature>
<accession>Q9Y2C9</accession>
<accession>B3Y640</accession>
<accession>B6CH35</accession>
<accession>B6RFS4</accession>
<accession>B6RFS5</accession>
<accession>Q2NKL3</accession>
<organism>
    <name type="scientific">Homo sapiens</name>
    <name type="common">Human</name>
    <dbReference type="NCBI Taxonomy" id="9606"/>
    <lineage>
        <taxon>Eukaryota</taxon>
        <taxon>Metazoa</taxon>
        <taxon>Chordata</taxon>
        <taxon>Craniata</taxon>
        <taxon>Vertebrata</taxon>
        <taxon>Euteleostomi</taxon>
        <taxon>Mammalia</taxon>
        <taxon>Eutheria</taxon>
        <taxon>Euarchontoglires</taxon>
        <taxon>Primates</taxon>
        <taxon>Haplorrhini</taxon>
        <taxon>Catarrhini</taxon>
        <taxon>Hominidae</taxon>
        <taxon>Homo</taxon>
    </lineage>
</organism>
<gene>
    <name type="primary">TLR6</name>
</gene>
<keyword id="KW-0002">3D-structure</keyword>
<keyword id="KW-0025">Alternative splicing</keyword>
<keyword id="KW-1003">Cell membrane</keyword>
<keyword id="KW-0968">Cytoplasmic vesicle</keyword>
<keyword id="KW-1015">Disulfide bond</keyword>
<keyword id="KW-0325">Glycoprotein</keyword>
<keyword id="KW-0333">Golgi apparatus</keyword>
<keyword id="KW-0391">Immunity</keyword>
<keyword id="KW-0395">Inflammatory response</keyword>
<keyword id="KW-0399">Innate immunity</keyword>
<keyword id="KW-0433">Leucine-rich repeat</keyword>
<keyword id="KW-0472">Membrane</keyword>
<keyword id="KW-0520">NAD</keyword>
<keyword id="KW-1267">Proteomics identification</keyword>
<keyword id="KW-0675">Receptor</keyword>
<keyword id="KW-1185">Reference proteome</keyword>
<keyword id="KW-0677">Repeat</keyword>
<keyword id="KW-0732">Signal</keyword>
<keyword id="KW-0812">Transmembrane</keyword>
<keyword id="KW-1133">Transmembrane helix</keyword>